<dbReference type="EMBL" id="BA000004">
    <property type="protein sequence ID" value="BAB07314.1"/>
    <property type="molecule type" value="Genomic_DNA"/>
</dbReference>
<dbReference type="PIR" id="C84099">
    <property type="entry name" value="C84099"/>
</dbReference>
<dbReference type="RefSeq" id="WP_010899723.1">
    <property type="nucleotide sequence ID" value="NC_002570.2"/>
</dbReference>
<dbReference type="SMR" id="Q9K6X9"/>
<dbReference type="STRING" id="272558.gene:10729508"/>
<dbReference type="KEGG" id="bha:BH3595"/>
<dbReference type="eggNOG" id="COG0556">
    <property type="taxonomic scope" value="Bacteria"/>
</dbReference>
<dbReference type="HOGENOM" id="CLU_009621_2_1_9"/>
<dbReference type="OrthoDB" id="9806651at2"/>
<dbReference type="Proteomes" id="UP000001258">
    <property type="component" value="Chromosome"/>
</dbReference>
<dbReference type="GO" id="GO:0005737">
    <property type="term" value="C:cytoplasm"/>
    <property type="evidence" value="ECO:0007669"/>
    <property type="project" value="UniProtKB-SubCell"/>
</dbReference>
<dbReference type="GO" id="GO:0009380">
    <property type="term" value="C:excinuclease repair complex"/>
    <property type="evidence" value="ECO:0007669"/>
    <property type="project" value="InterPro"/>
</dbReference>
<dbReference type="GO" id="GO:0005524">
    <property type="term" value="F:ATP binding"/>
    <property type="evidence" value="ECO:0007669"/>
    <property type="project" value="UniProtKB-UniRule"/>
</dbReference>
<dbReference type="GO" id="GO:0016887">
    <property type="term" value="F:ATP hydrolysis activity"/>
    <property type="evidence" value="ECO:0007669"/>
    <property type="project" value="InterPro"/>
</dbReference>
<dbReference type="GO" id="GO:0003677">
    <property type="term" value="F:DNA binding"/>
    <property type="evidence" value="ECO:0007669"/>
    <property type="project" value="UniProtKB-UniRule"/>
</dbReference>
<dbReference type="GO" id="GO:0009381">
    <property type="term" value="F:excinuclease ABC activity"/>
    <property type="evidence" value="ECO:0007669"/>
    <property type="project" value="UniProtKB-UniRule"/>
</dbReference>
<dbReference type="GO" id="GO:0006289">
    <property type="term" value="P:nucleotide-excision repair"/>
    <property type="evidence" value="ECO:0007669"/>
    <property type="project" value="UniProtKB-UniRule"/>
</dbReference>
<dbReference type="GO" id="GO:0009432">
    <property type="term" value="P:SOS response"/>
    <property type="evidence" value="ECO:0007669"/>
    <property type="project" value="UniProtKB-UniRule"/>
</dbReference>
<dbReference type="CDD" id="cd17916">
    <property type="entry name" value="DEXHc_UvrB"/>
    <property type="match status" value="1"/>
</dbReference>
<dbReference type="CDD" id="cd18790">
    <property type="entry name" value="SF2_C_UvrB"/>
    <property type="match status" value="1"/>
</dbReference>
<dbReference type="Gene3D" id="6.10.140.240">
    <property type="match status" value="1"/>
</dbReference>
<dbReference type="Gene3D" id="3.40.50.300">
    <property type="entry name" value="P-loop containing nucleotide triphosphate hydrolases"/>
    <property type="match status" value="3"/>
</dbReference>
<dbReference type="Gene3D" id="4.10.860.10">
    <property type="entry name" value="UVR domain"/>
    <property type="match status" value="1"/>
</dbReference>
<dbReference type="HAMAP" id="MF_00204">
    <property type="entry name" value="UvrB"/>
    <property type="match status" value="1"/>
</dbReference>
<dbReference type="InterPro" id="IPR006935">
    <property type="entry name" value="Helicase/UvrB_N"/>
</dbReference>
<dbReference type="InterPro" id="IPR014001">
    <property type="entry name" value="Helicase_ATP-bd"/>
</dbReference>
<dbReference type="InterPro" id="IPR001650">
    <property type="entry name" value="Helicase_C-like"/>
</dbReference>
<dbReference type="InterPro" id="IPR027417">
    <property type="entry name" value="P-loop_NTPase"/>
</dbReference>
<dbReference type="InterPro" id="IPR001943">
    <property type="entry name" value="UVR_dom"/>
</dbReference>
<dbReference type="InterPro" id="IPR036876">
    <property type="entry name" value="UVR_dom_sf"/>
</dbReference>
<dbReference type="InterPro" id="IPR004807">
    <property type="entry name" value="UvrB"/>
</dbReference>
<dbReference type="InterPro" id="IPR041471">
    <property type="entry name" value="UvrB_inter"/>
</dbReference>
<dbReference type="InterPro" id="IPR024759">
    <property type="entry name" value="UvrB_YAD/RRR_dom"/>
</dbReference>
<dbReference type="NCBIfam" id="NF003673">
    <property type="entry name" value="PRK05298.1"/>
    <property type="match status" value="1"/>
</dbReference>
<dbReference type="NCBIfam" id="TIGR00631">
    <property type="entry name" value="uvrb"/>
    <property type="match status" value="1"/>
</dbReference>
<dbReference type="PANTHER" id="PTHR24029">
    <property type="entry name" value="UVRABC SYSTEM PROTEIN B"/>
    <property type="match status" value="1"/>
</dbReference>
<dbReference type="PANTHER" id="PTHR24029:SF0">
    <property type="entry name" value="UVRABC SYSTEM PROTEIN B"/>
    <property type="match status" value="1"/>
</dbReference>
<dbReference type="Pfam" id="PF00271">
    <property type="entry name" value="Helicase_C"/>
    <property type="match status" value="1"/>
</dbReference>
<dbReference type="Pfam" id="PF04851">
    <property type="entry name" value="ResIII"/>
    <property type="match status" value="1"/>
</dbReference>
<dbReference type="Pfam" id="PF02151">
    <property type="entry name" value="UVR"/>
    <property type="match status" value="1"/>
</dbReference>
<dbReference type="Pfam" id="PF12344">
    <property type="entry name" value="UvrB"/>
    <property type="match status" value="1"/>
</dbReference>
<dbReference type="Pfam" id="PF17757">
    <property type="entry name" value="UvrB_inter"/>
    <property type="match status" value="1"/>
</dbReference>
<dbReference type="SMART" id="SM00487">
    <property type="entry name" value="DEXDc"/>
    <property type="match status" value="1"/>
</dbReference>
<dbReference type="SMART" id="SM00490">
    <property type="entry name" value="HELICc"/>
    <property type="match status" value="1"/>
</dbReference>
<dbReference type="SUPFAM" id="SSF46600">
    <property type="entry name" value="C-terminal UvrC-binding domain of UvrB"/>
    <property type="match status" value="1"/>
</dbReference>
<dbReference type="SUPFAM" id="SSF52540">
    <property type="entry name" value="P-loop containing nucleoside triphosphate hydrolases"/>
    <property type="match status" value="2"/>
</dbReference>
<dbReference type="PROSITE" id="PS51192">
    <property type="entry name" value="HELICASE_ATP_BIND_1"/>
    <property type="match status" value="1"/>
</dbReference>
<dbReference type="PROSITE" id="PS51194">
    <property type="entry name" value="HELICASE_CTER"/>
    <property type="match status" value="1"/>
</dbReference>
<dbReference type="PROSITE" id="PS50151">
    <property type="entry name" value="UVR"/>
    <property type="match status" value="1"/>
</dbReference>
<evidence type="ECO:0000255" key="1">
    <source>
        <dbReference type="HAMAP-Rule" id="MF_00204"/>
    </source>
</evidence>
<protein>
    <recommendedName>
        <fullName evidence="1">UvrABC system protein B</fullName>
        <shortName evidence="1">Protein UvrB</shortName>
    </recommendedName>
    <alternativeName>
        <fullName evidence="1">Excinuclease ABC subunit B</fullName>
    </alternativeName>
</protein>
<comment type="function">
    <text evidence="1">The UvrABC repair system catalyzes the recognition and processing of DNA lesions. A damage recognition complex composed of 2 UvrA and 2 UvrB subunits scans DNA for abnormalities. Upon binding of the UvrA(2)B(2) complex to a putative damaged site, the DNA wraps around one UvrB monomer. DNA wrap is dependent on ATP binding by UvrB and probably causes local melting of the DNA helix, facilitating insertion of UvrB beta-hairpin between the DNA strands. Then UvrB probes one DNA strand for the presence of a lesion. If a lesion is found the UvrA subunits dissociate and the UvrB-DNA preincision complex is formed. This complex is subsequently bound by UvrC and the second UvrB is released. If no lesion is found, the DNA wraps around the other UvrB subunit that will check the other stand for damage.</text>
</comment>
<comment type="subunit">
    <text evidence="1">Forms a heterotetramer with UvrA during the search for lesions. Interacts with UvrC in an incision complex.</text>
</comment>
<comment type="subcellular location">
    <subcellularLocation>
        <location evidence="1">Cytoplasm</location>
    </subcellularLocation>
</comment>
<comment type="domain">
    <text evidence="1">The beta-hairpin motif is involved in DNA binding.</text>
</comment>
<comment type="similarity">
    <text evidence="1">Belongs to the UvrB family.</text>
</comment>
<feature type="chain" id="PRO_0000138380" description="UvrABC system protein B">
    <location>
        <begin position="1"/>
        <end position="660"/>
    </location>
</feature>
<feature type="domain" description="Helicase ATP-binding" evidence="1">
    <location>
        <begin position="26"/>
        <end position="413"/>
    </location>
</feature>
<feature type="domain" description="Helicase C-terminal" evidence="1">
    <location>
        <begin position="430"/>
        <end position="592"/>
    </location>
</feature>
<feature type="domain" description="UVR" evidence="1">
    <location>
        <begin position="624"/>
        <end position="659"/>
    </location>
</feature>
<feature type="short sequence motif" description="Beta-hairpin">
    <location>
        <begin position="92"/>
        <end position="115"/>
    </location>
</feature>
<feature type="binding site" evidence="1">
    <location>
        <begin position="39"/>
        <end position="46"/>
    </location>
    <ligand>
        <name>ATP</name>
        <dbReference type="ChEBI" id="CHEBI:30616"/>
    </ligand>
</feature>
<reference key="1">
    <citation type="journal article" date="2000" name="Nucleic Acids Res.">
        <title>Complete genome sequence of the alkaliphilic bacterium Bacillus halodurans and genomic sequence comparison with Bacillus subtilis.</title>
        <authorList>
            <person name="Takami H."/>
            <person name="Nakasone K."/>
            <person name="Takaki Y."/>
            <person name="Maeno G."/>
            <person name="Sasaki R."/>
            <person name="Masui N."/>
            <person name="Fuji F."/>
            <person name="Hirama C."/>
            <person name="Nakamura Y."/>
            <person name="Ogasawara N."/>
            <person name="Kuhara S."/>
            <person name="Horikoshi K."/>
        </authorList>
    </citation>
    <scope>NUCLEOTIDE SEQUENCE [LARGE SCALE GENOMIC DNA]</scope>
    <source>
        <strain>ATCC BAA-125 / DSM 18197 / FERM 7344 / JCM 9153 / C-125</strain>
    </source>
</reference>
<gene>
    <name evidence="1" type="primary">uvrB</name>
    <name type="ordered locus">BH3595</name>
</gene>
<keyword id="KW-0067">ATP-binding</keyword>
<keyword id="KW-0963">Cytoplasm</keyword>
<keyword id="KW-0227">DNA damage</keyword>
<keyword id="KW-0228">DNA excision</keyword>
<keyword id="KW-0234">DNA repair</keyword>
<keyword id="KW-0267">Excision nuclease</keyword>
<keyword id="KW-0547">Nucleotide-binding</keyword>
<keyword id="KW-1185">Reference proteome</keyword>
<keyword id="KW-0742">SOS response</keyword>
<name>UVRB_HALH5</name>
<sequence>MSQSFELVSQYKPQGDQPNAIRQLVAGINEGKKHQTLLGATGTGKTFTMSNVIQQVNKPTLVIAHNKTLAGQLYSEFKEFFPNNAVEYFVSYYDYYQPEAYVPQSDTYIEKDASINDEIDKLRHSATSALFERNDVIIVASVSCIYGLGSPEEYKELVCSLRTGMEIERNDLLRQLVDIQYDRNDVNFTRGTFRVRGDVVEIFPASRDEQCIRVEFFGDEIDRITEVDALTGEIKGERNHVAIFPASHFVTREEKLKRATKSIEAELEERLKELHDRGKLLEAQRLEQRTRYDLEMIHEMGFCSGIENYSRHLTLRKAGETPYTLLDFFPDDFLIIIDESHVTIPQIRAMYNGDQARKGVLVDHGFRLPSALDNRPLKFEEFEHKVHQAVFVSATPGPYELEHTPEMVEQIIRPTGLLDPVIEVRPIEGQIDDLIGEINERVAKNERVLVTTLTKKMAEDLTDYLKEVGIKVRYLHSEVKTLERIEIIRQLRLGTFNVLVGINLLREGLDIPEVSLVAILDADKEGFLRAERSLIQTIGRAARNANGYVIMYADRMTKSMQIAIDETKRRRSIQEEYNRKHGITPKTIEKRIPDVIKATAMVAEDGEEYTSHAPKQKMSKKEREAVIERMEAEMKEAAKTLNFERAAELRDLILELKAEG</sequence>
<accession>Q9K6X9</accession>
<organism>
    <name type="scientific">Halalkalibacterium halodurans (strain ATCC BAA-125 / DSM 18197 / FERM 7344 / JCM 9153 / C-125)</name>
    <name type="common">Bacillus halodurans</name>
    <dbReference type="NCBI Taxonomy" id="272558"/>
    <lineage>
        <taxon>Bacteria</taxon>
        <taxon>Bacillati</taxon>
        <taxon>Bacillota</taxon>
        <taxon>Bacilli</taxon>
        <taxon>Bacillales</taxon>
        <taxon>Bacillaceae</taxon>
        <taxon>Halalkalibacterium (ex Joshi et al. 2022)</taxon>
    </lineage>
</organism>
<proteinExistence type="inferred from homology"/>